<sequence length="449" mass="50342">MREILHIQGGQCGNQIGSKFWEVICDEHGIDSTGRYSGDTADLQLERINVYYNEASGGRYVPRAVLMDLEPGTMDSIRSGPFGQIFRPDNFVFGQSGAGNNWAKGHYTEGAELIDAVLDVVRKEAENCDCLQGFQVCHSLGGGTGSGMGTLLISKIREEYPDRMMLTFSVFPSPKVSDTVVEPYNATLSVHQLVENADECMVLDNEALYDICFRTLKLSTPSFGDLNHLISATMSGVTCSLRFPGQLNSDLRKLAVNLIPFPRLHFFMVGFAPLTSRGSQQYISLTVPELTQQMWDSKNMMCAADPRHGRYLTASAIFRGQMSTKEVDEQILNIQNKNSSYFVEWIPNNVKSSVCDIPPKGLKMAATFVGNSTSIQEMFRRVSEQFTAMFRRKAFLHWYTGEGMDEMEFTEAESNMNDLVAEYQQYQDATADEEGEYDVEEEEEGDYET</sequence>
<proteinExistence type="evidence at transcript level"/>
<dbReference type="EMBL" id="M84702">
    <property type="protein sequence ID" value="AAA32883.1"/>
    <property type="molecule type" value="Genomic_DNA"/>
</dbReference>
<dbReference type="EMBL" id="AC022472">
    <property type="protein sequence ID" value="AAF79912.1"/>
    <property type="molecule type" value="Genomic_DNA"/>
</dbReference>
<dbReference type="EMBL" id="CP002684">
    <property type="protein sequence ID" value="AEE29922.1"/>
    <property type="molecule type" value="Genomic_DNA"/>
</dbReference>
<dbReference type="EMBL" id="AF361585">
    <property type="protein sequence ID" value="AAK32753.1"/>
    <property type="molecule type" value="mRNA"/>
</dbReference>
<dbReference type="EMBL" id="AY093989">
    <property type="protein sequence ID" value="AAM16250.1"/>
    <property type="molecule type" value="mRNA"/>
</dbReference>
<dbReference type="PIR" id="JQ1589">
    <property type="entry name" value="JQ1589"/>
</dbReference>
<dbReference type="RefSeq" id="NP_564101.1">
    <property type="nucleotide sequence ID" value="NM_101856.3"/>
</dbReference>
<dbReference type="SMR" id="P29513"/>
<dbReference type="BioGRID" id="23829">
    <property type="interactions" value="11"/>
</dbReference>
<dbReference type="FunCoup" id="P29513">
    <property type="interactions" value="1907"/>
</dbReference>
<dbReference type="IntAct" id="P29513">
    <property type="interactions" value="2"/>
</dbReference>
<dbReference type="STRING" id="3702.P29513"/>
<dbReference type="MetOSite" id="P29513"/>
<dbReference type="PaxDb" id="3702-AT1G20010.1"/>
<dbReference type="ProteomicsDB" id="232985"/>
<dbReference type="EnsemblPlants" id="AT1G20010.1">
    <property type="protein sequence ID" value="AT1G20010.1"/>
    <property type="gene ID" value="AT1G20010"/>
</dbReference>
<dbReference type="GeneID" id="838590"/>
<dbReference type="Gramene" id="AT1G20010.1">
    <property type="protein sequence ID" value="AT1G20010.1"/>
    <property type="gene ID" value="AT1G20010"/>
</dbReference>
<dbReference type="KEGG" id="ath:AT1G20010"/>
<dbReference type="Araport" id="AT1G20010"/>
<dbReference type="TAIR" id="AT1G20010">
    <property type="gene designation" value="TUB5"/>
</dbReference>
<dbReference type="eggNOG" id="KOG1375">
    <property type="taxonomic scope" value="Eukaryota"/>
</dbReference>
<dbReference type="HOGENOM" id="CLU_015718_1_1_1"/>
<dbReference type="InParanoid" id="P29513"/>
<dbReference type="OMA" id="PMGLKMA"/>
<dbReference type="OrthoDB" id="1662883at2759"/>
<dbReference type="PhylomeDB" id="P29513"/>
<dbReference type="PRO" id="PR:P29513"/>
<dbReference type="Proteomes" id="UP000006548">
    <property type="component" value="Chromosome 1"/>
</dbReference>
<dbReference type="ExpressionAtlas" id="P29513">
    <property type="expression patterns" value="baseline and differential"/>
</dbReference>
<dbReference type="GO" id="GO:0009570">
    <property type="term" value="C:chloroplast stroma"/>
    <property type="evidence" value="ECO:0007005"/>
    <property type="project" value="TAIR"/>
</dbReference>
<dbReference type="GO" id="GO:0005829">
    <property type="term" value="C:cytosol"/>
    <property type="evidence" value="ECO:0007005"/>
    <property type="project" value="TAIR"/>
</dbReference>
<dbReference type="GO" id="GO:0005874">
    <property type="term" value="C:microtubule"/>
    <property type="evidence" value="ECO:0007669"/>
    <property type="project" value="UniProtKB-KW"/>
</dbReference>
<dbReference type="GO" id="GO:0005634">
    <property type="term" value="C:nucleus"/>
    <property type="evidence" value="ECO:0007005"/>
    <property type="project" value="TAIR"/>
</dbReference>
<dbReference type="GO" id="GO:0009505">
    <property type="term" value="C:plant-type cell wall"/>
    <property type="evidence" value="ECO:0007005"/>
    <property type="project" value="TAIR"/>
</dbReference>
<dbReference type="GO" id="GO:0000325">
    <property type="term" value="C:plant-type vacuole"/>
    <property type="evidence" value="ECO:0007005"/>
    <property type="project" value="TAIR"/>
</dbReference>
<dbReference type="GO" id="GO:0005886">
    <property type="term" value="C:plasma membrane"/>
    <property type="evidence" value="ECO:0007005"/>
    <property type="project" value="TAIR"/>
</dbReference>
<dbReference type="GO" id="GO:0045298">
    <property type="term" value="C:tubulin complex"/>
    <property type="evidence" value="ECO:0000250"/>
    <property type="project" value="TAIR"/>
</dbReference>
<dbReference type="GO" id="GO:0005525">
    <property type="term" value="F:GTP binding"/>
    <property type="evidence" value="ECO:0007669"/>
    <property type="project" value="UniProtKB-KW"/>
</dbReference>
<dbReference type="GO" id="GO:0003924">
    <property type="term" value="F:GTPase activity"/>
    <property type="evidence" value="ECO:0007669"/>
    <property type="project" value="InterPro"/>
</dbReference>
<dbReference type="GO" id="GO:0046872">
    <property type="term" value="F:metal ion binding"/>
    <property type="evidence" value="ECO:0007669"/>
    <property type="project" value="UniProtKB-KW"/>
</dbReference>
<dbReference type="GO" id="GO:0003729">
    <property type="term" value="F:mRNA binding"/>
    <property type="evidence" value="ECO:0000314"/>
    <property type="project" value="TAIR"/>
</dbReference>
<dbReference type="GO" id="GO:0005200">
    <property type="term" value="F:structural constituent of cytoskeleton"/>
    <property type="evidence" value="ECO:0000250"/>
    <property type="project" value="TAIR"/>
</dbReference>
<dbReference type="GO" id="GO:0007017">
    <property type="term" value="P:microtubule-based process"/>
    <property type="evidence" value="ECO:0000250"/>
    <property type="project" value="TAIR"/>
</dbReference>
<dbReference type="CDD" id="cd02187">
    <property type="entry name" value="beta_tubulin"/>
    <property type="match status" value="1"/>
</dbReference>
<dbReference type="FunFam" id="1.10.287.600:FF:000002">
    <property type="entry name" value="Tubulin beta chain"/>
    <property type="match status" value="1"/>
</dbReference>
<dbReference type="FunFam" id="3.30.1330.20:FF:000002">
    <property type="entry name" value="Tubulin beta chain"/>
    <property type="match status" value="1"/>
</dbReference>
<dbReference type="FunFam" id="3.40.50.1440:FF:000005">
    <property type="entry name" value="Tubulin beta chain"/>
    <property type="match status" value="1"/>
</dbReference>
<dbReference type="Gene3D" id="1.10.287.600">
    <property type="entry name" value="Helix hairpin bin"/>
    <property type="match status" value="1"/>
</dbReference>
<dbReference type="Gene3D" id="3.30.1330.20">
    <property type="entry name" value="Tubulin/FtsZ, C-terminal domain"/>
    <property type="match status" value="1"/>
</dbReference>
<dbReference type="Gene3D" id="3.40.50.1440">
    <property type="entry name" value="Tubulin/FtsZ, GTPase domain"/>
    <property type="match status" value="1"/>
</dbReference>
<dbReference type="InterPro" id="IPR013838">
    <property type="entry name" value="Beta-tubulin_BS"/>
</dbReference>
<dbReference type="InterPro" id="IPR002453">
    <property type="entry name" value="Beta_tubulin"/>
</dbReference>
<dbReference type="InterPro" id="IPR008280">
    <property type="entry name" value="Tub_FtsZ_C"/>
</dbReference>
<dbReference type="InterPro" id="IPR000217">
    <property type="entry name" value="Tubulin"/>
</dbReference>
<dbReference type="InterPro" id="IPR037103">
    <property type="entry name" value="Tubulin/FtsZ-like_C"/>
</dbReference>
<dbReference type="InterPro" id="IPR018316">
    <property type="entry name" value="Tubulin/FtsZ_2-layer-sand-dom"/>
</dbReference>
<dbReference type="InterPro" id="IPR036525">
    <property type="entry name" value="Tubulin/FtsZ_GTPase_sf"/>
</dbReference>
<dbReference type="InterPro" id="IPR023123">
    <property type="entry name" value="Tubulin_C"/>
</dbReference>
<dbReference type="InterPro" id="IPR017975">
    <property type="entry name" value="Tubulin_CS"/>
</dbReference>
<dbReference type="InterPro" id="IPR003008">
    <property type="entry name" value="Tubulin_FtsZ_GTPase"/>
</dbReference>
<dbReference type="PANTHER" id="PTHR11588">
    <property type="entry name" value="TUBULIN"/>
    <property type="match status" value="1"/>
</dbReference>
<dbReference type="Pfam" id="PF00091">
    <property type="entry name" value="Tubulin"/>
    <property type="match status" value="1"/>
</dbReference>
<dbReference type="Pfam" id="PF03953">
    <property type="entry name" value="Tubulin_C"/>
    <property type="match status" value="1"/>
</dbReference>
<dbReference type="PRINTS" id="PR01163">
    <property type="entry name" value="BETATUBULIN"/>
</dbReference>
<dbReference type="PRINTS" id="PR01161">
    <property type="entry name" value="TUBULIN"/>
</dbReference>
<dbReference type="SMART" id="SM00864">
    <property type="entry name" value="Tubulin"/>
    <property type="match status" value="1"/>
</dbReference>
<dbReference type="SMART" id="SM00865">
    <property type="entry name" value="Tubulin_C"/>
    <property type="match status" value="1"/>
</dbReference>
<dbReference type="SUPFAM" id="SSF55307">
    <property type="entry name" value="Tubulin C-terminal domain-like"/>
    <property type="match status" value="1"/>
</dbReference>
<dbReference type="SUPFAM" id="SSF52490">
    <property type="entry name" value="Tubulin nucleotide-binding domain-like"/>
    <property type="match status" value="1"/>
</dbReference>
<dbReference type="PROSITE" id="PS00227">
    <property type="entry name" value="TUBULIN"/>
    <property type="match status" value="1"/>
</dbReference>
<dbReference type="PROSITE" id="PS00228">
    <property type="entry name" value="TUBULIN_B_AUTOREG"/>
    <property type="match status" value="1"/>
</dbReference>
<protein>
    <recommendedName>
        <fullName>Tubulin beta-5 chain</fullName>
    </recommendedName>
    <alternativeName>
        <fullName>Beta-5-tubulin</fullName>
    </alternativeName>
</protein>
<reference key="1">
    <citation type="journal article" date="1992" name="Plant Cell">
        <title>The small genome of Arabidopsis contains at least nine expressed beta-tubulin genes.</title>
        <authorList>
            <person name="Snustad D.P."/>
            <person name="Haas N.A."/>
            <person name="Kopczak S.D."/>
            <person name="Silflow C.D."/>
        </authorList>
    </citation>
    <scope>NUCLEOTIDE SEQUENCE [GENOMIC DNA]</scope>
    <source>
        <strain>cv. Columbia</strain>
    </source>
</reference>
<reference key="2">
    <citation type="journal article" date="2000" name="Nature">
        <title>Sequence and analysis of chromosome 1 of the plant Arabidopsis thaliana.</title>
        <authorList>
            <person name="Theologis A."/>
            <person name="Ecker J.R."/>
            <person name="Palm C.J."/>
            <person name="Federspiel N.A."/>
            <person name="Kaul S."/>
            <person name="White O."/>
            <person name="Alonso J."/>
            <person name="Altafi H."/>
            <person name="Araujo R."/>
            <person name="Bowman C.L."/>
            <person name="Brooks S.Y."/>
            <person name="Buehler E."/>
            <person name="Chan A."/>
            <person name="Chao Q."/>
            <person name="Chen H."/>
            <person name="Cheuk R.F."/>
            <person name="Chin C.W."/>
            <person name="Chung M.K."/>
            <person name="Conn L."/>
            <person name="Conway A.B."/>
            <person name="Conway A.R."/>
            <person name="Creasy T.H."/>
            <person name="Dewar K."/>
            <person name="Dunn P."/>
            <person name="Etgu P."/>
            <person name="Feldblyum T.V."/>
            <person name="Feng J.-D."/>
            <person name="Fong B."/>
            <person name="Fujii C.Y."/>
            <person name="Gill J.E."/>
            <person name="Goldsmith A.D."/>
            <person name="Haas B."/>
            <person name="Hansen N.F."/>
            <person name="Hughes B."/>
            <person name="Huizar L."/>
            <person name="Hunter J.L."/>
            <person name="Jenkins J."/>
            <person name="Johnson-Hopson C."/>
            <person name="Khan S."/>
            <person name="Khaykin E."/>
            <person name="Kim C.J."/>
            <person name="Koo H.L."/>
            <person name="Kremenetskaia I."/>
            <person name="Kurtz D.B."/>
            <person name="Kwan A."/>
            <person name="Lam B."/>
            <person name="Langin-Hooper S."/>
            <person name="Lee A."/>
            <person name="Lee J.M."/>
            <person name="Lenz C.A."/>
            <person name="Li J.H."/>
            <person name="Li Y.-P."/>
            <person name="Lin X."/>
            <person name="Liu S.X."/>
            <person name="Liu Z.A."/>
            <person name="Luros J.S."/>
            <person name="Maiti R."/>
            <person name="Marziali A."/>
            <person name="Militscher J."/>
            <person name="Miranda M."/>
            <person name="Nguyen M."/>
            <person name="Nierman W.C."/>
            <person name="Osborne B.I."/>
            <person name="Pai G."/>
            <person name="Peterson J."/>
            <person name="Pham P.K."/>
            <person name="Rizzo M."/>
            <person name="Rooney T."/>
            <person name="Rowley D."/>
            <person name="Sakano H."/>
            <person name="Salzberg S.L."/>
            <person name="Schwartz J.R."/>
            <person name="Shinn P."/>
            <person name="Southwick A.M."/>
            <person name="Sun H."/>
            <person name="Tallon L.J."/>
            <person name="Tambunga G."/>
            <person name="Toriumi M.J."/>
            <person name="Town C.D."/>
            <person name="Utterback T."/>
            <person name="Van Aken S."/>
            <person name="Vaysberg M."/>
            <person name="Vysotskaia V.S."/>
            <person name="Walker M."/>
            <person name="Wu D."/>
            <person name="Yu G."/>
            <person name="Fraser C.M."/>
            <person name="Venter J.C."/>
            <person name="Davis R.W."/>
        </authorList>
    </citation>
    <scope>NUCLEOTIDE SEQUENCE [LARGE SCALE GENOMIC DNA]</scope>
    <source>
        <strain>cv. Columbia</strain>
    </source>
</reference>
<reference key="3">
    <citation type="journal article" date="2017" name="Plant J.">
        <title>Araport11: a complete reannotation of the Arabidopsis thaliana reference genome.</title>
        <authorList>
            <person name="Cheng C.Y."/>
            <person name="Krishnakumar V."/>
            <person name="Chan A.P."/>
            <person name="Thibaud-Nissen F."/>
            <person name="Schobel S."/>
            <person name="Town C.D."/>
        </authorList>
    </citation>
    <scope>GENOME REANNOTATION</scope>
    <source>
        <strain>cv. Columbia</strain>
    </source>
</reference>
<reference key="4">
    <citation type="journal article" date="2003" name="Science">
        <title>Empirical analysis of transcriptional activity in the Arabidopsis genome.</title>
        <authorList>
            <person name="Yamada K."/>
            <person name="Lim J."/>
            <person name="Dale J.M."/>
            <person name="Chen H."/>
            <person name="Shinn P."/>
            <person name="Palm C.J."/>
            <person name="Southwick A.M."/>
            <person name="Wu H.C."/>
            <person name="Kim C.J."/>
            <person name="Nguyen M."/>
            <person name="Pham P.K."/>
            <person name="Cheuk R.F."/>
            <person name="Karlin-Newmann G."/>
            <person name="Liu S.X."/>
            <person name="Lam B."/>
            <person name="Sakano H."/>
            <person name="Wu T."/>
            <person name="Yu G."/>
            <person name="Miranda M."/>
            <person name="Quach H.L."/>
            <person name="Tripp M."/>
            <person name="Chang C.H."/>
            <person name="Lee J.M."/>
            <person name="Toriumi M.J."/>
            <person name="Chan M.M."/>
            <person name="Tang C.C."/>
            <person name="Onodera C.S."/>
            <person name="Deng J.M."/>
            <person name="Akiyama K."/>
            <person name="Ansari Y."/>
            <person name="Arakawa T."/>
            <person name="Banh J."/>
            <person name="Banno F."/>
            <person name="Bowser L."/>
            <person name="Brooks S.Y."/>
            <person name="Carninci P."/>
            <person name="Chao Q."/>
            <person name="Choy N."/>
            <person name="Enju A."/>
            <person name="Goldsmith A.D."/>
            <person name="Gurjal M."/>
            <person name="Hansen N.F."/>
            <person name="Hayashizaki Y."/>
            <person name="Johnson-Hopson C."/>
            <person name="Hsuan V.W."/>
            <person name="Iida K."/>
            <person name="Karnes M."/>
            <person name="Khan S."/>
            <person name="Koesema E."/>
            <person name="Ishida J."/>
            <person name="Jiang P.X."/>
            <person name="Jones T."/>
            <person name="Kawai J."/>
            <person name="Kamiya A."/>
            <person name="Meyers C."/>
            <person name="Nakajima M."/>
            <person name="Narusaka M."/>
            <person name="Seki M."/>
            <person name="Sakurai T."/>
            <person name="Satou M."/>
            <person name="Tamse R."/>
            <person name="Vaysberg M."/>
            <person name="Wallender E.K."/>
            <person name="Wong C."/>
            <person name="Yamamura Y."/>
            <person name="Yuan S."/>
            <person name="Shinozaki K."/>
            <person name="Davis R.W."/>
            <person name="Theologis A."/>
            <person name="Ecker J.R."/>
        </authorList>
    </citation>
    <scope>NUCLEOTIDE SEQUENCE [LARGE SCALE MRNA]</scope>
    <source>
        <strain>cv. Columbia</strain>
    </source>
</reference>
<feature type="chain" id="PRO_0000048324" description="Tubulin beta-5 chain">
    <location>
        <begin position="1"/>
        <end position="449"/>
    </location>
</feature>
<feature type="region of interest" description="Disordered" evidence="3">
    <location>
        <begin position="427"/>
        <end position="449"/>
    </location>
</feature>
<feature type="compositionally biased region" description="Acidic residues" evidence="3">
    <location>
        <begin position="430"/>
        <end position="449"/>
    </location>
</feature>
<feature type="binding site" evidence="2">
    <location>
        <position position="11"/>
    </location>
    <ligand>
        <name>GTP</name>
        <dbReference type="ChEBI" id="CHEBI:37565"/>
    </ligand>
</feature>
<feature type="binding site" evidence="1">
    <location>
        <position position="70"/>
    </location>
    <ligand>
        <name>GTP</name>
        <dbReference type="ChEBI" id="CHEBI:37565"/>
    </ligand>
</feature>
<feature type="binding site" evidence="1">
    <location>
        <position position="70"/>
    </location>
    <ligand>
        <name>Mg(2+)</name>
        <dbReference type="ChEBI" id="CHEBI:18420"/>
    </ligand>
</feature>
<feature type="binding site" evidence="2">
    <location>
        <position position="139"/>
    </location>
    <ligand>
        <name>GTP</name>
        <dbReference type="ChEBI" id="CHEBI:37565"/>
    </ligand>
</feature>
<feature type="binding site" evidence="2">
    <location>
        <position position="143"/>
    </location>
    <ligand>
        <name>GTP</name>
        <dbReference type="ChEBI" id="CHEBI:37565"/>
    </ligand>
</feature>
<feature type="binding site" evidence="2">
    <location>
        <position position="144"/>
    </location>
    <ligand>
        <name>GTP</name>
        <dbReference type="ChEBI" id="CHEBI:37565"/>
    </ligand>
</feature>
<feature type="binding site" evidence="2">
    <location>
        <position position="145"/>
    </location>
    <ligand>
        <name>GTP</name>
        <dbReference type="ChEBI" id="CHEBI:37565"/>
    </ligand>
</feature>
<feature type="binding site" evidence="2">
    <location>
        <position position="205"/>
    </location>
    <ligand>
        <name>GTP</name>
        <dbReference type="ChEBI" id="CHEBI:37565"/>
    </ligand>
</feature>
<feature type="binding site" evidence="2">
    <location>
        <position position="227"/>
    </location>
    <ligand>
        <name>GTP</name>
        <dbReference type="ChEBI" id="CHEBI:37565"/>
    </ligand>
</feature>
<comment type="function">
    <text>Tubulin is the major constituent of microtubules, a cylinder consisting of laterally associated linear protofilaments composed of alpha- and beta-tubulin heterodimers. Microtubules grow by the addition of GTP-tubulin dimers to the microtubule end, where a stabilizing cap forms. Below the cap, tubulin dimers are in GDP-bound state, owing to GTPase activity of alpha-tubulin.</text>
</comment>
<comment type="cofactor">
    <cofactor evidence="1">
        <name>Mg(2+)</name>
        <dbReference type="ChEBI" id="CHEBI:18420"/>
    </cofactor>
</comment>
<comment type="subunit">
    <text>Dimer of alpha and beta chains. A typical microtubule is a hollow water-filled tube with an outer diameter of 25 nm and an inner diameter of 15 nM. Alpha-beta heterodimers associate head-to-tail to form protofilaments running lengthwise along the microtubule wall with the beta-tubulin subunit facing the microtubule plus end conferring a structural polarity. Microtubules usually have 13 protofilaments but different protofilament numbers can be found in some organisms and specialized cells.</text>
</comment>
<comment type="subcellular location">
    <subcellularLocation>
        <location>Cytoplasm</location>
        <location>Cytoskeleton</location>
    </subcellularLocation>
</comment>
<comment type="miscellaneous">
    <text>There are nine genes coding for beta-tubulin.</text>
</comment>
<comment type="similarity">
    <text evidence="4">Belongs to the tubulin family.</text>
</comment>
<evidence type="ECO:0000250" key="1">
    <source>
        <dbReference type="UniProtKB" id="P68363"/>
    </source>
</evidence>
<evidence type="ECO:0000250" key="2">
    <source>
        <dbReference type="UniProtKB" id="Q13509"/>
    </source>
</evidence>
<evidence type="ECO:0000256" key="3">
    <source>
        <dbReference type="SAM" id="MobiDB-lite"/>
    </source>
</evidence>
<evidence type="ECO:0000305" key="4"/>
<organism>
    <name type="scientific">Arabidopsis thaliana</name>
    <name type="common">Mouse-ear cress</name>
    <dbReference type="NCBI Taxonomy" id="3702"/>
    <lineage>
        <taxon>Eukaryota</taxon>
        <taxon>Viridiplantae</taxon>
        <taxon>Streptophyta</taxon>
        <taxon>Embryophyta</taxon>
        <taxon>Tracheophyta</taxon>
        <taxon>Spermatophyta</taxon>
        <taxon>Magnoliopsida</taxon>
        <taxon>eudicotyledons</taxon>
        <taxon>Gunneridae</taxon>
        <taxon>Pentapetalae</taxon>
        <taxon>rosids</taxon>
        <taxon>malvids</taxon>
        <taxon>Brassicales</taxon>
        <taxon>Brassicaceae</taxon>
        <taxon>Camelineae</taxon>
        <taxon>Arabidopsis</taxon>
    </lineage>
</organism>
<accession>P29513</accession>
<gene>
    <name type="primary">TUBB5</name>
    <name type="synonym">TUB5</name>
    <name type="ordered locus">At1g20010</name>
    <name type="ORF">T20H2.21</name>
</gene>
<keyword id="KW-0963">Cytoplasm</keyword>
<keyword id="KW-0206">Cytoskeleton</keyword>
<keyword id="KW-0342">GTP-binding</keyword>
<keyword id="KW-0460">Magnesium</keyword>
<keyword id="KW-0479">Metal-binding</keyword>
<keyword id="KW-0493">Microtubule</keyword>
<keyword id="KW-0547">Nucleotide-binding</keyword>
<keyword id="KW-1185">Reference proteome</keyword>
<name>TBB5_ARATH</name>